<dbReference type="EC" id="3.5.1.n3" evidence="1"/>
<dbReference type="EMBL" id="CP000886">
    <property type="protein sequence ID" value="ABX66107.1"/>
    <property type="molecule type" value="Genomic_DNA"/>
</dbReference>
<dbReference type="RefSeq" id="WP_000169758.1">
    <property type="nucleotide sequence ID" value="NC_010102.1"/>
</dbReference>
<dbReference type="SMR" id="A9N5B1"/>
<dbReference type="KEGG" id="spq:SPAB_00681"/>
<dbReference type="PATRIC" id="fig|1016998.12.peg.641"/>
<dbReference type="HOGENOM" id="CLU_084199_0_0_6"/>
<dbReference type="BioCyc" id="SENT1016998:SPAB_RS02835-MONOMER"/>
<dbReference type="UniPathway" id="UPA00030"/>
<dbReference type="UniPathway" id="UPA00036">
    <property type="reaction ID" value="UER00496"/>
</dbReference>
<dbReference type="Proteomes" id="UP000008556">
    <property type="component" value="Chromosome"/>
</dbReference>
<dbReference type="GO" id="GO:0016020">
    <property type="term" value="C:membrane"/>
    <property type="evidence" value="ECO:0007669"/>
    <property type="project" value="GOC"/>
</dbReference>
<dbReference type="GO" id="GO:0016811">
    <property type="term" value="F:hydrolase activity, acting on carbon-nitrogen (but not peptide) bonds, in linear amides"/>
    <property type="evidence" value="ECO:0007669"/>
    <property type="project" value="UniProtKB-UniRule"/>
</dbReference>
<dbReference type="GO" id="GO:0036108">
    <property type="term" value="P:4-amino-4-deoxy-alpha-L-arabinopyranosyl undecaprenyl phosphate biosynthetic process"/>
    <property type="evidence" value="ECO:0007669"/>
    <property type="project" value="UniProtKB-UniRule"/>
</dbReference>
<dbReference type="GO" id="GO:0009245">
    <property type="term" value="P:lipid A biosynthetic process"/>
    <property type="evidence" value="ECO:0007669"/>
    <property type="project" value="UniProtKB-UniRule"/>
</dbReference>
<dbReference type="GO" id="GO:0009103">
    <property type="term" value="P:lipopolysaccharide biosynthetic process"/>
    <property type="evidence" value="ECO:0007669"/>
    <property type="project" value="UniProtKB-UniRule"/>
</dbReference>
<dbReference type="GO" id="GO:0046677">
    <property type="term" value="P:response to antibiotic"/>
    <property type="evidence" value="ECO:0007669"/>
    <property type="project" value="UniProtKB-KW"/>
</dbReference>
<dbReference type="Gene3D" id="3.20.20.370">
    <property type="entry name" value="Glycoside hydrolase/deacetylase"/>
    <property type="match status" value="1"/>
</dbReference>
<dbReference type="HAMAP" id="MF_01870">
    <property type="entry name" value="ArnD"/>
    <property type="match status" value="1"/>
</dbReference>
<dbReference type="InterPro" id="IPR023557">
    <property type="entry name" value="ArnD"/>
</dbReference>
<dbReference type="InterPro" id="IPR011330">
    <property type="entry name" value="Glyco_hydro/deAcase_b/a-brl"/>
</dbReference>
<dbReference type="InterPro" id="IPR002509">
    <property type="entry name" value="NODB_dom"/>
</dbReference>
<dbReference type="InterPro" id="IPR050248">
    <property type="entry name" value="Polysacc_deacetylase_ArnD"/>
</dbReference>
<dbReference type="NCBIfam" id="NF011923">
    <property type="entry name" value="PRK15394.1"/>
    <property type="match status" value="1"/>
</dbReference>
<dbReference type="PANTHER" id="PTHR10587:SF137">
    <property type="entry name" value="4-DEOXY-4-FORMAMIDO-L-ARABINOSE-PHOSPHOUNDECAPRENOL DEFORMYLASE ARND-RELATED"/>
    <property type="match status" value="1"/>
</dbReference>
<dbReference type="PANTHER" id="PTHR10587">
    <property type="entry name" value="GLYCOSYL TRANSFERASE-RELATED"/>
    <property type="match status" value="1"/>
</dbReference>
<dbReference type="Pfam" id="PF01522">
    <property type="entry name" value="Polysacc_deac_1"/>
    <property type="match status" value="1"/>
</dbReference>
<dbReference type="SUPFAM" id="SSF88713">
    <property type="entry name" value="Glycoside hydrolase/deacetylase"/>
    <property type="match status" value="1"/>
</dbReference>
<dbReference type="PROSITE" id="PS51677">
    <property type="entry name" value="NODB"/>
    <property type="match status" value="1"/>
</dbReference>
<feature type="chain" id="PRO_0000383536" description="Probable 4-deoxy-4-formamido-L-arabinose-phosphoundecaprenol deformylase ArnD">
    <location>
        <begin position="1"/>
        <end position="299"/>
    </location>
</feature>
<feature type="domain" description="NodB homology" evidence="1">
    <location>
        <begin position="2"/>
        <end position="260"/>
    </location>
</feature>
<gene>
    <name evidence="1" type="primary">arnD</name>
    <name type="ordered locus">SPAB_00681</name>
</gene>
<comment type="function">
    <text evidence="1">Catalyzes the deformylation of 4-deoxy-4-formamido-L-arabinose-phosphoundecaprenol to 4-amino-4-deoxy-L-arabinose-phosphoundecaprenol. The modified arabinose is attached to lipid A and is required for resistance to polymyxin and cationic antimicrobial peptides.</text>
</comment>
<comment type="catalytic activity">
    <reaction evidence="1">
        <text>4-deoxy-4-formamido-alpha-L-arabinopyranosyl di-trans,octa-cis-undecaprenyl phosphate + H2O = 4-amino-4-deoxy-alpha-L-arabinopyranosyl di-trans,octa-cis-undecaprenyl phosphate + formate</text>
        <dbReference type="Rhea" id="RHEA:27734"/>
        <dbReference type="ChEBI" id="CHEBI:15377"/>
        <dbReference type="ChEBI" id="CHEBI:15740"/>
        <dbReference type="ChEBI" id="CHEBI:58909"/>
        <dbReference type="ChEBI" id="CHEBI:60463"/>
        <dbReference type="EC" id="3.5.1.n3"/>
    </reaction>
</comment>
<comment type="pathway">
    <text evidence="1">Glycolipid biosynthesis; 4-amino-4-deoxy-alpha-L-arabinose undecaprenyl phosphate biosynthesis; 4-amino-4-deoxy-alpha-L-arabinose undecaprenyl phosphate from UDP-4-deoxy-4-formamido-beta-L-arabinose and undecaprenyl phosphate: step 2/2.</text>
</comment>
<comment type="pathway">
    <text evidence="1">Bacterial outer membrane biogenesis; lipopolysaccharide biosynthesis.</text>
</comment>
<comment type="similarity">
    <text evidence="1">Belongs to the polysaccharide deacetylase family. ArnD deformylase subfamily.</text>
</comment>
<name>ARND_SALPB</name>
<evidence type="ECO:0000255" key="1">
    <source>
        <dbReference type="HAMAP-Rule" id="MF_01870"/>
    </source>
</evidence>
<reference key="1">
    <citation type="submission" date="2007-11" db="EMBL/GenBank/DDBJ databases">
        <authorList>
            <consortium name="The Salmonella enterica serovar Paratyphi B Genome Sequencing Project"/>
            <person name="McClelland M."/>
            <person name="Sanderson E.K."/>
            <person name="Porwollik S."/>
            <person name="Spieth J."/>
            <person name="Clifton W.S."/>
            <person name="Fulton R."/>
            <person name="Cordes M."/>
            <person name="Wollam A."/>
            <person name="Shah N."/>
            <person name="Pepin K."/>
            <person name="Bhonagiri V."/>
            <person name="Nash W."/>
            <person name="Johnson M."/>
            <person name="Thiruvilangam P."/>
            <person name="Wilson R."/>
        </authorList>
    </citation>
    <scope>NUCLEOTIDE SEQUENCE [LARGE SCALE GENOMIC DNA]</scope>
    <source>
        <strain>ATCC BAA-1250 / SPB7</strain>
    </source>
</reference>
<keyword id="KW-0046">Antibiotic resistance</keyword>
<keyword id="KW-0378">Hydrolase</keyword>
<keyword id="KW-0441">Lipid A biosynthesis</keyword>
<keyword id="KW-0444">Lipid biosynthesis</keyword>
<keyword id="KW-0443">Lipid metabolism</keyword>
<keyword id="KW-0448">Lipopolysaccharide biosynthesis</keyword>
<sequence length="299" mass="33020">MTKVGLRIDVDTLRGTREGVPRLLATLHRHGVQASFFFSVGPDNMGRHLWRLIKPRFLWKMLRSNAASLYGWDILLAGTAWPGKNIGNANAGIIRETATYHETGLHAWDHHAWQTHSGHWSIRQLEEDIARGITALEAIIGKPVTCSAAAGWRADGRVVRAKEPFNLRYNSDCRGTTLFRPLLMPGQTGTPQIPVTLPTWDEVIGPAVQAQSFNTWIISRMLQDKGTPVYTIHAEVEGIVHQPLFEDLLVRARDAGITFCPLGELLPASPESLPLGQIVRGHIPGREGWLGCQQAASAS</sequence>
<protein>
    <recommendedName>
        <fullName evidence="1">Probable 4-deoxy-4-formamido-L-arabinose-phosphoundecaprenol deformylase ArnD</fullName>
        <ecNumber evidence="1">3.5.1.n3</ecNumber>
    </recommendedName>
</protein>
<proteinExistence type="inferred from homology"/>
<organism>
    <name type="scientific">Salmonella paratyphi B (strain ATCC BAA-1250 / SPB7)</name>
    <dbReference type="NCBI Taxonomy" id="1016998"/>
    <lineage>
        <taxon>Bacteria</taxon>
        <taxon>Pseudomonadati</taxon>
        <taxon>Pseudomonadota</taxon>
        <taxon>Gammaproteobacteria</taxon>
        <taxon>Enterobacterales</taxon>
        <taxon>Enterobacteriaceae</taxon>
        <taxon>Salmonella</taxon>
    </lineage>
</organism>
<accession>A9N5B1</accession>